<organism>
    <name type="scientific">Staphylococcus aureus (strain USA300)</name>
    <dbReference type="NCBI Taxonomy" id="367830"/>
    <lineage>
        <taxon>Bacteria</taxon>
        <taxon>Bacillati</taxon>
        <taxon>Bacillota</taxon>
        <taxon>Bacilli</taxon>
        <taxon>Bacillales</taxon>
        <taxon>Staphylococcaceae</taxon>
        <taxon>Staphylococcus</taxon>
    </lineage>
</organism>
<gene>
    <name type="primary">walR</name>
    <name type="ordered locus">SAUSA300_0020</name>
</gene>
<name>WALR_STAA3</name>
<reference key="1">
    <citation type="journal article" date="2006" name="Lancet">
        <title>Complete genome sequence of USA300, an epidemic clone of community-acquired meticillin-resistant Staphylococcus aureus.</title>
        <authorList>
            <person name="Diep B.A."/>
            <person name="Gill S.R."/>
            <person name="Chang R.F."/>
            <person name="Phan T.H."/>
            <person name="Chen J.H."/>
            <person name="Davidson M.G."/>
            <person name="Lin F."/>
            <person name="Lin J."/>
            <person name="Carleton H.A."/>
            <person name="Mongodin E.F."/>
            <person name="Sensabaugh G.F."/>
            <person name="Perdreau-Remington F."/>
        </authorList>
    </citation>
    <scope>NUCLEOTIDE SEQUENCE [LARGE SCALE GENOMIC DNA]</scope>
    <source>
        <strain>USA300</strain>
    </source>
</reference>
<keyword id="KW-0010">Activator</keyword>
<keyword id="KW-0963">Cytoplasm</keyword>
<keyword id="KW-0238">DNA-binding</keyword>
<keyword id="KW-0597">Phosphoprotein</keyword>
<keyword id="KW-0804">Transcription</keyword>
<keyword id="KW-0805">Transcription regulation</keyword>
<keyword id="KW-0902">Two-component regulatory system</keyword>
<accession>Q2FKN8</accession>
<proteinExistence type="inferred from homology"/>
<comment type="function">
    <text evidence="1 3">Member of the two-component regulatory system WalK/WalR that regulates genes involved in cell wall metabolism, virulence regulation, biofilm production, oxidative stress resistance and antibiotic resistance via direct or indirect regulation of autolysins (By similarity). Functions as a transcription regulator by direct binding to promoter regions (By similarity).</text>
</comment>
<comment type="subcellular location">
    <subcellularLocation>
        <location evidence="6">Cytoplasm</location>
    </subcellularLocation>
</comment>
<comment type="PTM">
    <text evidence="2 3">Phosphorylated by WalK on Asp-53 (By similarity). Phosphorylated by PknB on Thr-101 (By similarity).</text>
</comment>
<evidence type="ECO:0000250" key="1">
    <source>
        <dbReference type="UniProtKB" id="Q2G2U6"/>
    </source>
</evidence>
<evidence type="ECO:0000250" key="2">
    <source>
        <dbReference type="UniProtKB" id="Q7A8E1"/>
    </source>
</evidence>
<evidence type="ECO:0000250" key="3">
    <source>
        <dbReference type="UniProtKB" id="Q9RDT5"/>
    </source>
</evidence>
<evidence type="ECO:0000255" key="4">
    <source>
        <dbReference type="PROSITE-ProRule" id="PRU00169"/>
    </source>
</evidence>
<evidence type="ECO:0000255" key="5">
    <source>
        <dbReference type="PROSITE-ProRule" id="PRU01091"/>
    </source>
</evidence>
<evidence type="ECO:0000305" key="6"/>
<protein>
    <recommendedName>
        <fullName evidence="6">Transcriptional regulatory protein WalR</fullName>
    </recommendedName>
</protein>
<feature type="chain" id="PRO_0000353045" description="Transcriptional regulatory protein WalR">
    <location>
        <begin position="1"/>
        <end position="233"/>
    </location>
</feature>
<feature type="domain" description="Response regulatory" evidence="4">
    <location>
        <begin position="4"/>
        <end position="117"/>
    </location>
</feature>
<feature type="DNA-binding region" description="OmpR/PhoB-type" evidence="5">
    <location>
        <begin position="132"/>
        <end position="231"/>
    </location>
</feature>
<feature type="modified residue" description="4-aspartylphosphate" evidence="4">
    <location>
        <position position="53"/>
    </location>
</feature>
<feature type="modified residue" description="Phosphothreonine" evidence="2">
    <location>
        <position position="101"/>
    </location>
</feature>
<dbReference type="EMBL" id="CP000255">
    <property type="protein sequence ID" value="ABD20798.1"/>
    <property type="molecule type" value="Genomic_DNA"/>
</dbReference>
<dbReference type="SMR" id="Q2FKN8"/>
<dbReference type="KEGG" id="saa:SAUSA300_0020"/>
<dbReference type="HOGENOM" id="CLU_000445_30_4_9"/>
<dbReference type="Proteomes" id="UP000001939">
    <property type="component" value="Chromosome"/>
</dbReference>
<dbReference type="GO" id="GO:0005829">
    <property type="term" value="C:cytosol"/>
    <property type="evidence" value="ECO:0007669"/>
    <property type="project" value="TreeGrafter"/>
</dbReference>
<dbReference type="GO" id="GO:0032993">
    <property type="term" value="C:protein-DNA complex"/>
    <property type="evidence" value="ECO:0007669"/>
    <property type="project" value="TreeGrafter"/>
</dbReference>
<dbReference type="GO" id="GO:0000156">
    <property type="term" value="F:phosphorelay response regulator activity"/>
    <property type="evidence" value="ECO:0007669"/>
    <property type="project" value="TreeGrafter"/>
</dbReference>
<dbReference type="GO" id="GO:0000976">
    <property type="term" value="F:transcription cis-regulatory region binding"/>
    <property type="evidence" value="ECO:0007669"/>
    <property type="project" value="TreeGrafter"/>
</dbReference>
<dbReference type="GO" id="GO:0006355">
    <property type="term" value="P:regulation of DNA-templated transcription"/>
    <property type="evidence" value="ECO:0007669"/>
    <property type="project" value="InterPro"/>
</dbReference>
<dbReference type="CDD" id="cd17614">
    <property type="entry name" value="REC_OmpR_YycF-like"/>
    <property type="match status" value="1"/>
</dbReference>
<dbReference type="CDD" id="cd00383">
    <property type="entry name" value="trans_reg_C"/>
    <property type="match status" value="1"/>
</dbReference>
<dbReference type="FunFam" id="1.10.10.10:FF:000089">
    <property type="entry name" value="Alkaline phosphatase synthesis response regulator"/>
    <property type="match status" value="1"/>
</dbReference>
<dbReference type="FunFam" id="3.40.50.2300:FF:000052">
    <property type="entry name" value="DNA-binding response regulator YycF"/>
    <property type="match status" value="1"/>
</dbReference>
<dbReference type="Gene3D" id="3.40.50.2300">
    <property type="match status" value="1"/>
</dbReference>
<dbReference type="Gene3D" id="6.10.250.690">
    <property type="match status" value="1"/>
</dbReference>
<dbReference type="Gene3D" id="1.10.10.10">
    <property type="entry name" value="Winged helix-like DNA-binding domain superfamily/Winged helix DNA-binding domain"/>
    <property type="match status" value="1"/>
</dbReference>
<dbReference type="InterPro" id="IPR011006">
    <property type="entry name" value="CheY-like_superfamily"/>
</dbReference>
<dbReference type="InterPro" id="IPR001867">
    <property type="entry name" value="OmpR/PhoB-type_DNA-bd"/>
</dbReference>
<dbReference type="InterPro" id="IPR047791">
    <property type="entry name" value="Resp_reg_WalR"/>
</dbReference>
<dbReference type="InterPro" id="IPR016032">
    <property type="entry name" value="Sig_transdc_resp-reg_C-effctor"/>
</dbReference>
<dbReference type="InterPro" id="IPR001789">
    <property type="entry name" value="Sig_transdc_resp-reg_receiver"/>
</dbReference>
<dbReference type="InterPro" id="IPR039420">
    <property type="entry name" value="WalR-like"/>
</dbReference>
<dbReference type="InterPro" id="IPR036388">
    <property type="entry name" value="WH-like_DNA-bd_sf"/>
</dbReference>
<dbReference type="NCBIfam" id="NF040534">
    <property type="entry name" value="resp_reg_YycF"/>
    <property type="match status" value="1"/>
</dbReference>
<dbReference type="PANTHER" id="PTHR48111:SF40">
    <property type="entry name" value="PHOSPHATE REGULON TRANSCRIPTIONAL REGULATORY PROTEIN PHOB"/>
    <property type="match status" value="1"/>
</dbReference>
<dbReference type="PANTHER" id="PTHR48111">
    <property type="entry name" value="REGULATOR OF RPOS"/>
    <property type="match status" value="1"/>
</dbReference>
<dbReference type="Pfam" id="PF00072">
    <property type="entry name" value="Response_reg"/>
    <property type="match status" value="1"/>
</dbReference>
<dbReference type="Pfam" id="PF00486">
    <property type="entry name" value="Trans_reg_C"/>
    <property type="match status" value="1"/>
</dbReference>
<dbReference type="SMART" id="SM00448">
    <property type="entry name" value="REC"/>
    <property type="match status" value="1"/>
</dbReference>
<dbReference type="SMART" id="SM00862">
    <property type="entry name" value="Trans_reg_C"/>
    <property type="match status" value="1"/>
</dbReference>
<dbReference type="SUPFAM" id="SSF46894">
    <property type="entry name" value="C-terminal effector domain of the bipartite response regulators"/>
    <property type="match status" value="1"/>
</dbReference>
<dbReference type="SUPFAM" id="SSF52172">
    <property type="entry name" value="CheY-like"/>
    <property type="match status" value="1"/>
</dbReference>
<dbReference type="PROSITE" id="PS51755">
    <property type="entry name" value="OMPR_PHOB"/>
    <property type="match status" value="1"/>
</dbReference>
<dbReference type="PROSITE" id="PS50110">
    <property type="entry name" value="RESPONSE_REGULATORY"/>
    <property type="match status" value="1"/>
</dbReference>
<sequence length="233" mass="27192">MARKVVVVDDEKPIADILEFNLKKEGYDVYCAYDGNDAVDLIYEEEPDIVLLDIMLPGRDGMEVCREVRKKYEMPIIMLTAKDSEIDKVLGLELGADDYVTKPFSTRELIARVKANLRRHYSQPAQDTGNVTNEITIKDIVIYPDAYSIKKRGEDIELTHREFELFHYLSKHMGQVMTREHLLQTVWGYDYFGDVRTVDVTIRRLREKIEDDPSHPEYIVTRRGVGYFLQQHE</sequence>